<keyword id="KW-0067">ATP-binding</keyword>
<keyword id="KW-0520">NAD</keyword>
<keyword id="KW-0547">Nucleotide-binding</keyword>
<keyword id="KW-0548">Nucleotidyltransferase</keyword>
<keyword id="KW-0662">Pyridine nucleotide biosynthesis</keyword>
<keyword id="KW-1185">Reference proteome</keyword>
<keyword id="KW-0808">Transferase</keyword>
<reference key="1">
    <citation type="journal article" date="2004" name="Nucleic Acids Res.">
        <title>Thermoadaptation trait revealed by the genome sequence of thermophilic Geobacillus kaustophilus.</title>
        <authorList>
            <person name="Takami H."/>
            <person name="Takaki Y."/>
            <person name="Chee G.-J."/>
            <person name="Nishi S."/>
            <person name="Shimamura S."/>
            <person name="Suzuki H."/>
            <person name="Matsui S."/>
            <person name="Uchiyama I."/>
        </authorList>
    </citation>
    <scope>NUCLEOTIDE SEQUENCE [LARGE SCALE GENOMIC DNA]</scope>
    <source>
        <strain>HTA426</strain>
    </source>
</reference>
<protein>
    <recommendedName>
        <fullName evidence="1">Probable nicotinate-nucleotide adenylyltransferase</fullName>
        <ecNumber evidence="1">2.7.7.18</ecNumber>
    </recommendedName>
    <alternativeName>
        <fullName evidence="1">Deamido-NAD(+) diphosphorylase</fullName>
    </alternativeName>
    <alternativeName>
        <fullName evidence="1">Deamido-NAD(+) pyrophosphorylase</fullName>
    </alternativeName>
    <alternativeName>
        <fullName evidence="1">Nicotinate mononucleotide adenylyltransferase</fullName>
        <shortName evidence="1">NaMN adenylyltransferase</shortName>
    </alternativeName>
</protein>
<dbReference type="EC" id="2.7.7.18" evidence="1"/>
<dbReference type="EMBL" id="BA000043">
    <property type="protein sequence ID" value="BAD76807.1"/>
    <property type="molecule type" value="Genomic_DNA"/>
</dbReference>
<dbReference type="RefSeq" id="WP_011232001.1">
    <property type="nucleotide sequence ID" value="NC_006510.1"/>
</dbReference>
<dbReference type="SMR" id="Q5KWX9"/>
<dbReference type="STRING" id="235909.GK2522"/>
<dbReference type="KEGG" id="gka:GK2522"/>
<dbReference type="eggNOG" id="COG1057">
    <property type="taxonomic scope" value="Bacteria"/>
</dbReference>
<dbReference type="HOGENOM" id="CLU_069765_3_1_9"/>
<dbReference type="UniPathway" id="UPA00253">
    <property type="reaction ID" value="UER00332"/>
</dbReference>
<dbReference type="Proteomes" id="UP000001172">
    <property type="component" value="Chromosome"/>
</dbReference>
<dbReference type="GO" id="GO:0005524">
    <property type="term" value="F:ATP binding"/>
    <property type="evidence" value="ECO:0007669"/>
    <property type="project" value="UniProtKB-KW"/>
</dbReference>
<dbReference type="GO" id="GO:0004515">
    <property type="term" value="F:nicotinate-nucleotide adenylyltransferase activity"/>
    <property type="evidence" value="ECO:0007669"/>
    <property type="project" value="UniProtKB-UniRule"/>
</dbReference>
<dbReference type="GO" id="GO:0009435">
    <property type="term" value="P:NAD biosynthetic process"/>
    <property type="evidence" value="ECO:0007669"/>
    <property type="project" value="UniProtKB-UniRule"/>
</dbReference>
<dbReference type="CDD" id="cd02165">
    <property type="entry name" value="NMNAT"/>
    <property type="match status" value="1"/>
</dbReference>
<dbReference type="FunFam" id="3.40.50.620:FF:000079">
    <property type="entry name" value="Probable nicotinate-nucleotide adenylyltransferase"/>
    <property type="match status" value="1"/>
</dbReference>
<dbReference type="Gene3D" id="3.40.50.620">
    <property type="entry name" value="HUPs"/>
    <property type="match status" value="1"/>
</dbReference>
<dbReference type="HAMAP" id="MF_00244">
    <property type="entry name" value="NaMN_adenylyltr"/>
    <property type="match status" value="1"/>
</dbReference>
<dbReference type="InterPro" id="IPR004821">
    <property type="entry name" value="Cyt_trans-like"/>
</dbReference>
<dbReference type="InterPro" id="IPR005248">
    <property type="entry name" value="NadD/NMNAT"/>
</dbReference>
<dbReference type="InterPro" id="IPR014729">
    <property type="entry name" value="Rossmann-like_a/b/a_fold"/>
</dbReference>
<dbReference type="NCBIfam" id="TIGR00125">
    <property type="entry name" value="cyt_tran_rel"/>
    <property type="match status" value="1"/>
</dbReference>
<dbReference type="NCBIfam" id="TIGR00482">
    <property type="entry name" value="nicotinate (nicotinamide) nucleotide adenylyltransferase"/>
    <property type="match status" value="1"/>
</dbReference>
<dbReference type="NCBIfam" id="NF000840">
    <property type="entry name" value="PRK00071.1-3"/>
    <property type="match status" value="1"/>
</dbReference>
<dbReference type="NCBIfam" id="NF000841">
    <property type="entry name" value="PRK00071.1-4"/>
    <property type="match status" value="1"/>
</dbReference>
<dbReference type="PANTHER" id="PTHR39321">
    <property type="entry name" value="NICOTINATE-NUCLEOTIDE ADENYLYLTRANSFERASE-RELATED"/>
    <property type="match status" value="1"/>
</dbReference>
<dbReference type="PANTHER" id="PTHR39321:SF3">
    <property type="entry name" value="PHOSPHOPANTETHEINE ADENYLYLTRANSFERASE"/>
    <property type="match status" value="1"/>
</dbReference>
<dbReference type="Pfam" id="PF01467">
    <property type="entry name" value="CTP_transf_like"/>
    <property type="match status" value="1"/>
</dbReference>
<dbReference type="SUPFAM" id="SSF52374">
    <property type="entry name" value="Nucleotidylyl transferase"/>
    <property type="match status" value="1"/>
</dbReference>
<evidence type="ECO:0000255" key="1">
    <source>
        <dbReference type="HAMAP-Rule" id="MF_00244"/>
    </source>
</evidence>
<comment type="function">
    <text evidence="1">Catalyzes the reversible adenylation of nicotinate mononucleotide (NaMN) to nicotinic acid adenine dinucleotide (NaAD).</text>
</comment>
<comment type="catalytic activity">
    <reaction evidence="1">
        <text>nicotinate beta-D-ribonucleotide + ATP + H(+) = deamido-NAD(+) + diphosphate</text>
        <dbReference type="Rhea" id="RHEA:22860"/>
        <dbReference type="ChEBI" id="CHEBI:15378"/>
        <dbReference type="ChEBI" id="CHEBI:30616"/>
        <dbReference type="ChEBI" id="CHEBI:33019"/>
        <dbReference type="ChEBI" id="CHEBI:57502"/>
        <dbReference type="ChEBI" id="CHEBI:58437"/>
        <dbReference type="EC" id="2.7.7.18"/>
    </reaction>
</comment>
<comment type="pathway">
    <text evidence="1">Cofactor biosynthesis; NAD(+) biosynthesis; deamido-NAD(+) from nicotinate D-ribonucleotide: step 1/1.</text>
</comment>
<comment type="similarity">
    <text evidence="1">Belongs to the NadD family.</text>
</comment>
<accession>Q5KWX9</accession>
<organism>
    <name type="scientific">Geobacillus kaustophilus (strain HTA426)</name>
    <dbReference type="NCBI Taxonomy" id="235909"/>
    <lineage>
        <taxon>Bacteria</taxon>
        <taxon>Bacillati</taxon>
        <taxon>Bacillota</taxon>
        <taxon>Bacilli</taxon>
        <taxon>Bacillales</taxon>
        <taxon>Anoxybacillaceae</taxon>
        <taxon>Geobacillus</taxon>
        <taxon>Geobacillus thermoleovorans group</taxon>
    </lineage>
</organism>
<gene>
    <name evidence="1" type="primary">nadD</name>
    <name type="ordered locus">GK2522</name>
</gene>
<proteinExistence type="inferred from homology"/>
<sequence>MGKIGIFGGTFDPPHYGHLLMANEVLDALQLSEIWFLPNRLPPHKQHEQVTKSEDRLRMLELAVAGHPRFHIETIELEREGPSYTYDTIRQLVAMHPNDEFYFIIGADMVEYLPHWHRIDELIELVTFVGVKRPGFSMETPYPVIEVEAPQFAVSSSLIRERVRNGQTIRYLVPEGVRLYIEEKGLYGARTGVTDRETTADRAALRAYAWRCRDRC</sequence>
<name>NADD_GEOKA</name>
<feature type="chain" id="PRO_0000310116" description="Probable nicotinate-nucleotide adenylyltransferase">
    <location>
        <begin position="1"/>
        <end position="216"/>
    </location>
</feature>